<organism>
    <name type="scientific">Staphylococcus aureus (strain Mu50 / ATCC 700699)</name>
    <dbReference type="NCBI Taxonomy" id="158878"/>
    <lineage>
        <taxon>Bacteria</taxon>
        <taxon>Bacillati</taxon>
        <taxon>Bacillota</taxon>
        <taxon>Bacilli</taxon>
        <taxon>Bacillales</taxon>
        <taxon>Staphylococcaceae</taxon>
        <taxon>Staphylococcus</taxon>
    </lineage>
</organism>
<dbReference type="EC" id="5.1.1.1" evidence="1"/>
<dbReference type="EMBL" id="BA000017">
    <property type="protein sequence ID" value="BAB57561.1"/>
    <property type="molecule type" value="Genomic_DNA"/>
</dbReference>
<dbReference type="RefSeq" id="WP_000127595.1">
    <property type="nucleotide sequence ID" value="NC_002758.2"/>
</dbReference>
<dbReference type="SMR" id="P63482"/>
<dbReference type="KEGG" id="sav:SAV1399"/>
<dbReference type="HOGENOM" id="CLU_028393_2_2_9"/>
<dbReference type="PhylomeDB" id="P63482"/>
<dbReference type="UniPathway" id="UPA00042">
    <property type="reaction ID" value="UER00497"/>
</dbReference>
<dbReference type="Proteomes" id="UP000002481">
    <property type="component" value="Chromosome"/>
</dbReference>
<dbReference type="GO" id="GO:0005829">
    <property type="term" value="C:cytosol"/>
    <property type="evidence" value="ECO:0007669"/>
    <property type="project" value="TreeGrafter"/>
</dbReference>
<dbReference type="GO" id="GO:0008784">
    <property type="term" value="F:alanine racemase activity"/>
    <property type="evidence" value="ECO:0007669"/>
    <property type="project" value="UniProtKB-UniRule"/>
</dbReference>
<dbReference type="GO" id="GO:0030170">
    <property type="term" value="F:pyridoxal phosphate binding"/>
    <property type="evidence" value="ECO:0007669"/>
    <property type="project" value="UniProtKB-UniRule"/>
</dbReference>
<dbReference type="GO" id="GO:0030632">
    <property type="term" value="P:D-alanine biosynthetic process"/>
    <property type="evidence" value="ECO:0007669"/>
    <property type="project" value="UniProtKB-UniRule"/>
</dbReference>
<dbReference type="GO" id="GO:0009252">
    <property type="term" value="P:peptidoglycan biosynthetic process"/>
    <property type="evidence" value="ECO:0007669"/>
    <property type="project" value="TreeGrafter"/>
</dbReference>
<dbReference type="Gene3D" id="3.20.20.10">
    <property type="entry name" value="Alanine racemase"/>
    <property type="match status" value="1"/>
</dbReference>
<dbReference type="Gene3D" id="2.40.37.10">
    <property type="entry name" value="Lyase, Ornithine Decarboxylase, Chain A, domain 1"/>
    <property type="match status" value="1"/>
</dbReference>
<dbReference type="HAMAP" id="MF_01201">
    <property type="entry name" value="Ala_racemase"/>
    <property type="match status" value="1"/>
</dbReference>
<dbReference type="InterPro" id="IPR000821">
    <property type="entry name" value="Ala_racemase"/>
</dbReference>
<dbReference type="InterPro" id="IPR009006">
    <property type="entry name" value="Ala_racemase/Decarboxylase_C"/>
</dbReference>
<dbReference type="InterPro" id="IPR011079">
    <property type="entry name" value="Ala_racemase_C"/>
</dbReference>
<dbReference type="InterPro" id="IPR001608">
    <property type="entry name" value="Ala_racemase_N"/>
</dbReference>
<dbReference type="InterPro" id="IPR029066">
    <property type="entry name" value="PLP-binding_barrel"/>
</dbReference>
<dbReference type="PANTHER" id="PTHR30511">
    <property type="entry name" value="ALANINE RACEMASE"/>
    <property type="match status" value="1"/>
</dbReference>
<dbReference type="PANTHER" id="PTHR30511:SF0">
    <property type="entry name" value="ALANINE RACEMASE, CATABOLIC-RELATED"/>
    <property type="match status" value="1"/>
</dbReference>
<dbReference type="Pfam" id="PF00842">
    <property type="entry name" value="Ala_racemase_C"/>
    <property type="match status" value="1"/>
</dbReference>
<dbReference type="Pfam" id="PF01168">
    <property type="entry name" value="Ala_racemase_N"/>
    <property type="match status" value="1"/>
</dbReference>
<dbReference type="PRINTS" id="PR00992">
    <property type="entry name" value="ALARACEMASE"/>
</dbReference>
<dbReference type="SMART" id="SM01005">
    <property type="entry name" value="Ala_racemase_C"/>
    <property type="match status" value="1"/>
</dbReference>
<dbReference type="SUPFAM" id="SSF50621">
    <property type="entry name" value="Alanine racemase C-terminal domain-like"/>
    <property type="match status" value="1"/>
</dbReference>
<dbReference type="SUPFAM" id="SSF51419">
    <property type="entry name" value="PLP-binding barrel"/>
    <property type="match status" value="1"/>
</dbReference>
<evidence type="ECO:0000255" key="1">
    <source>
        <dbReference type="HAMAP-Rule" id="MF_01201"/>
    </source>
</evidence>
<reference key="1">
    <citation type="journal article" date="2001" name="Lancet">
        <title>Whole genome sequencing of meticillin-resistant Staphylococcus aureus.</title>
        <authorList>
            <person name="Kuroda M."/>
            <person name="Ohta T."/>
            <person name="Uchiyama I."/>
            <person name="Baba T."/>
            <person name="Yuzawa H."/>
            <person name="Kobayashi I."/>
            <person name="Cui L."/>
            <person name="Oguchi A."/>
            <person name="Aoki K."/>
            <person name="Nagai Y."/>
            <person name="Lian J.-Q."/>
            <person name="Ito T."/>
            <person name="Kanamori M."/>
            <person name="Matsumaru H."/>
            <person name="Maruyama A."/>
            <person name="Murakami H."/>
            <person name="Hosoyama A."/>
            <person name="Mizutani-Ui Y."/>
            <person name="Takahashi N.K."/>
            <person name="Sawano T."/>
            <person name="Inoue R."/>
            <person name="Kaito C."/>
            <person name="Sekimizu K."/>
            <person name="Hirakawa H."/>
            <person name="Kuhara S."/>
            <person name="Goto S."/>
            <person name="Yabuzaki J."/>
            <person name="Kanehisa M."/>
            <person name="Yamashita A."/>
            <person name="Oshima K."/>
            <person name="Furuya K."/>
            <person name="Yoshino C."/>
            <person name="Shiba T."/>
            <person name="Hattori M."/>
            <person name="Ogasawara N."/>
            <person name="Hayashi H."/>
            <person name="Hiramatsu K."/>
        </authorList>
    </citation>
    <scope>NUCLEOTIDE SEQUENCE [LARGE SCALE GENOMIC DNA]</scope>
    <source>
        <strain>Mu50 / ATCC 700699</strain>
    </source>
</reference>
<keyword id="KW-0413">Isomerase</keyword>
<keyword id="KW-0663">Pyridoxal phosphate</keyword>
<feature type="chain" id="PRO_0000114577" description="Alanine racemase 2">
    <location>
        <begin position="1"/>
        <end position="361"/>
    </location>
</feature>
<feature type="active site" description="Proton acceptor; specific for D-alanine" evidence="1">
    <location>
        <position position="30"/>
    </location>
</feature>
<feature type="active site" description="Proton acceptor; specific for L-alanine" evidence="1">
    <location>
        <position position="256"/>
    </location>
</feature>
<feature type="binding site" evidence="1">
    <location>
        <position position="122"/>
    </location>
    <ligand>
        <name>substrate</name>
    </ligand>
</feature>
<feature type="binding site" evidence="1">
    <location>
        <position position="303"/>
    </location>
    <ligand>
        <name>substrate</name>
    </ligand>
</feature>
<feature type="modified residue" description="N6-(pyridoxal phosphate)lysine" evidence="1">
    <location>
        <position position="30"/>
    </location>
</feature>
<sequence>MTATWSVNKKIFLQNAITVKNNQPLMAVVKNNAYHYDLEFAVTQFIHAGIDTFSTTSLREAIQIRQLAPDATIFLMNAVYEFDLVREHQIHMTLPSLTYYYNHKNDLAGIHVHLEFENLLHRSGFKDLNEIKEVLKDHHHNQNAKMIISGLWTHFGYADEFDVSDYNVERSQWMEIVEALLSEGYQFDLIHAQNSASFYREGQILLPHHTHARVGIALYGSRPYSSLNQHDIVQSLTVKAHVIQVREVQAGDYCGYSFAFEVTKNNTKLAVVDIGYGDGILRTRAKHEALINGKRYPIRALMMSHMFVEVDGNVHAQDEVILYNNDIRIDEYTFKGVGANSEQLSAMNHDSLKKEYISNDC</sequence>
<comment type="function">
    <text evidence="1">Catalyzes the interconversion of L-alanine and D-alanine. May also act on other amino acids.</text>
</comment>
<comment type="catalytic activity">
    <reaction evidence="1">
        <text>L-alanine = D-alanine</text>
        <dbReference type="Rhea" id="RHEA:20249"/>
        <dbReference type="ChEBI" id="CHEBI:57416"/>
        <dbReference type="ChEBI" id="CHEBI:57972"/>
        <dbReference type="EC" id="5.1.1.1"/>
    </reaction>
</comment>
<comment type="cofactor">
    <cofactor evidence="1">
        <name>pyridoxal 5'-phosphate</name>
        <dbReference type="ChEBI" id="CHEBI:597326"/>
    </cofactor>
</comment>
<comment type="pathway">
    <text evidence="1">Amino-acid biosynthesis; D-alanine biosynthesis; D-alanine from L-alanine: step 1/1.</text>
</comment>
<comment type="similarity">
    <text evidence="1">Belongs to the alanine racemase family.</text>
</comment>
<proteinExistence type="inferred from homology"/>
<name>ALR2_STAAM</name>
<accession>P63482</accession>
<accession>Q99U86</accession>
<protein>
    <recommendedName>
        <fullName evidence="1">Alanine racemase 2</fullName>
        <ecNumber evidence="1">5.1.1.1</ecNumber>
    </recommendedName>
</protein>
<gene>
    <name type="primary">alr2</name>
    <name type="ordered locus">SAV1399</name>
</gene>